<feature type="chain" id="PRO_0000247836" description="Protein mono-ADP-ribosyltransferase TIPARP">
    <location>
        <begin position="1"/>
        <end position="657"/>
    </location>
</feature>
<feature type="domain" description="WWE" evidence="2">
    <location>
        <begin position="333"/>
        <end position="411"/>
    </location>
</feature>
<feature type="domain" description="PARP catalytic" evidence="3">
    <location>
        <begin position="449"/>
        <end position="657"/>
    </location>
</feature>
<feature type="zinc finger region" description="C3H1-type" evidence="4">
    <location>
        <begin position="238"/>
        <end position="265"/>
    </location>
</feature>
<feature type="region of interest" description="Disordered" evidence="5">
    <location>
        <begin position="1"/>
        <end position="22"/>
    </location>
</feature>
<feature type="region of interest" description="Disordered" evidence="5">
    <location>
        <begin position="121"/>
        <end position="154"/>
    </location>
</feature>
<feature type="short sequence motif" description="Nuclear localization signal" evidence="1">
    <location>
        <begin position="41"/>
        <end position="48"/>
    </location>
</feature>
<feature type="compositionally biased region" description="Acidic residues" evidence="5">
    <location>
        <begin position="1"/>
        <end position="10"/>
    </location>
</feature>
<feature type="modified residue" description="ADP-ribosylcysteine" evidence="1">
    <location>
        <position position="39"/>
    </location>
</feature>
<feature type="sequence conflict" description="In Ref. 2; BAC27876." evidence="10" ref="2">
    <original>R</original>
    <variation>H</variation>
    <location>
        <position position="521"/>
    </location>
</feature>
<feature type="sequence conflict" description="In Ref. 2; BAC27876." evidence="10" ref="2">
    <original>D</original>
    <variation>N</variation>
    <location>
        <position position="620"/>
    </location>
</feature>
<organism>
    <name type="scientific">Mus musculus</name>
    <name type="common">Mouse</name>
    <dbReference type="NCBI Taxonomy" id="10090"/>
    <lineage>
        <taxon>Eukaryota</taxon>
        <taxon>Metazoa</taxon>
        <taxon>Chordata</taxon>
        <taxon>Craniata</taxon>
        <taxon>Vertebrata</taxon>
        <taxon>Euteleostomi</taxon>
        <taxon>Mammalia</taxon>
        <taxon>Eutheria</taxon>
        <taxon>Euarchontoglires</taxon>
        <taxon>Glires</taxon>
        <taxon>Rodentia</taxon>
        <taxon>Myomorpha</taxon>
        <taxon>Muroidea</taxon>
        <taxon>Muridae</taxon>
        <taxon>Murinae</taxon>
        <taxon>Mus</taxon>
        <taxon>Mus</taxon>
    </lineage>
</organism>
<keyword id="KW-0013">ADP-ribosylation</keyword>
<keyword id="KW-0328">Glycosyltransferase</keyword>
<keyword id="KW-0479">Metal-binding</keyword>
<keyword id="KW-0520">NAD</keyword>
<keyword id="KW-0548">Nucleotidyltransferase</keyword>
<keyword id="KW-0539">Nucleus</keyword>
<keyword id="KW-1185">Reference proteome</keyword>
<keyword id="KW-0808">Transferase</keyword>
<keyword id="KW-0862">Zinc</keyword>
<keyword id="KW-0863">Zinc-finger</keyword>
<comment type="function">
    <text evidence="1 11">ADP-ribosyltransferase that mediates mono-ADP-ribosylation of glutamate, aspartate and cysteine residues on target proteins (By similarity). Acts as a negative regulator of AHR by mediating mono-ADP-ribosylation of AHR, leading to inhibit transcription activator activity of AHR (Probable).</text>
</comment>
<comment type="catalytic activity">
    <reaction evidence="1">
        <text>L-aspartyl-[protein] + NAD(+) = 4-O-(ADP-D-ribosyl)-L-aspartyl-[protein] + nicotinamide</text>
        <dbReference type="Rhea" id="RHEA:54424"/>
        <dbReference type="Rhea" id="RHEA-COMP:9867"/>
        <dbReference type="Rhea" id="RHEA-COMP:13832"/>
        <dbReference type="ChEBI" id="CHEBI:17154"/>
        <dbReference type="ChEBI" id="CHEBI:29961"/>
        <dbReference type="ChEBI" id="CHEBI:57540"/>
        <dbReference type="ChEBI" id="CHEBI:138102"/>
    </reaction>
</comment>
<comment type="catalytic activity">
    <reaction evidence="1">
        <text>L-glutamyl-[protein] + NAD(+) = 5-O-(ADP-D-ribosyl)-L-glutamyl-[protein] + nicotinamide</text>
        <dbReference type="Rhea" id="RHEA:58224"/>
        <dbReference type="Rhea" id="RHEA-COMP:10208"/>
        <dbReference type="Rhea" id="RHEA-COMP:15089"/>
        <dbReference type="ChEBI" id="CHEBI:17154"/>
        <dbReference type="ChEBI" id="CHEBI:29973"/>
        <dbReference type="ChEBI" id="CHEBI:57540"/>
        <dbReference type="ChEBI" id="CHEBI:142540"/>
    </reaction>
</comment>
<comment type="catalytic activity">
    <reaction evidence="1">
        <text>L-cysteinyl-[protein] + NAD(+) = S-(ADP-D-ribosyl)-L-cysteinyl-[protein] + nicotinamide + H(+)</text>
        <dbReference type="Rhea" id="RHEA:56612"/>
        <dbReference type="Rhea" id="RHEA-COMP:10131"/>
        <dbReference type="Rhea" id="RHEA-COMP:14624"/>
        <dbReference type="ChEBI" id="CHEBI:15378"/>
        <dbReference type="ChEBI" id="CHEBI:17154"/>
        <dbReference type="ChEBI" id="CHEBI:29950"/>
        <dbReference type="ChEBI" id="CHEBI:57540"/>
        <dbReference type="ChEBI" id="CHEBI:140607"/>
    </reaction>
</comment>
<comment type="subunit">
    <text evidence="1">Interacts with AHR.</text>
</comment>
<comment type="subcellular location">
    <subcellularLocation>
        <location evidence="8">Nucleus</location>
    </subcellularLocation>
</comment>
<comment type="tissue specificity">
    <text evidence="6">Ubiquitously expressed.</text>
</comment>
<comment type="induction">
    <text evidence="6 7">By 2,3,7,8-tetrachlorodibenzo-p-dioxin (TCDD), which is a by-product of industrial processes and an important environmental contaminant (PubMed:11716501, PubMed:12147270). This induction is concentration and time-dependent and is mediated through an aryl hydrocarbon receptor (AhR) and aryl hydrocarbon receptor nuclear translocation (Arnt) signal transduction (PubMed:11716501, PubMed:12147270). Superinduced by cycloheximide and by inhibitors of the 26S proteasome (PubMed:11716501, PubMed:12147270).</text>
</comment>
<comment type="PTM">
    <text evidence="1">Auto-mono-ADP-ribosylated.</text>
</comment>
<comment type="similarity">
    <text evidence="10">Belongs to the ARTD/PARP family.</text>
</comment>
<protein>
    <recommendedName>
        <fullName evidence="10">Protein mono-ADP-ribosyltransferase TIPARP</fullName>
        <ecNumber evidence="8">2.4.2.-</ecNumber>
    </recommendedName>
    <alternativeName>
        <fullName>ADP-ribosyltransferase diphtheria toxin-like 14</fullName>
        <shortName>ARTD14</shortName>
    </alternativeName>
    <alternativeName>
        <fullName evidence="9">TCDD-inducible poly [ADP-ribose] polymerase</fullName>
    </alternativeName>
</protein>
<sequence>MEVETTEPEPDCVVQPPSPSDDFSCQMRISEKISPLKTCFKKKQEQKRLGTGTLRSLRPILNTLLESGSLDGVFRARDQNRDESSLHEHIVKKPLEINPSCPPAENSMPVLIPDGTNVEGQLPEAHPSTDAPEQGVPIQDHSFPPETISGTVADSTTGHFQTDLLHPVSGDVPTSPDCVDKVMDYVPGAFQDNSFTIQYILDTSDKLSTELFQDKSEEASLELVFELVNQLQYHTHQENGIEICMDFLQGTCIYGRDCLKHHTVLPYHWQIKRTTTQKWQSVSNDSQEHLERFYCNPENDRMRMKYGGQDFWADLNAMTVFETTEFDQLRRLSTPPCSNSNSIYHTFWKFFCRDHFGWREYPESVVRLIEEANSRGLKEVRFMMWNNHYILHNSFFRREIKRRPLFRSCFILIPYLQTLGGVPTQASLPLEATSSQIICPDGVTSANFYPETWVYMHPSQDFIQVPVSAEDKSYRIIYNLFHKTVPEFKYRILQILRVQNQFLWEKYKRKKEYMNRKMSGRDRIINERHLFHGTSQDVVDGICKHNFDPRVCGKHATMFGQGSYFAKKASYSHNFSKKSSKGVHFMFLAKVLTGRYTMGSHGMRRPPPVNPGSVTSDLYDSCVDNFFEPQIFVIFNDDQSYPYFVIQYEEVSNTVSI</sequence>
<evidence type="ECO:0000250" key="1">
    <source>
        <dbReference type="UniProtKB" id="Q7Z3E1"/>
    </source>
</evidence>
<evidence type="ECO:0000255" key="2">
    <source>
        <dbReference type="PROSITE-ProRule" id="PRU00248"/>
    </source>
</evidence>
<evidence type="ECO:0000255" key="3">
    <source>
        <dbReference type="PROSITE-ProRule" id="PRU00397"/>
    </source>
</evidence>
<evidence type="ECO:0000255" key="4">
    <source>
        <dbReference type="PROSITE-ProRule" id="PRU00723"/>
    </source>
</evidence>
<evidence type="ECO:0000256" key="5">
    <source>
        <dbReference type="SAM" id="MobiDB-lite"/>
    </source>
</evidence>
<evidence type="ECO:0000269" key="6">
    <source>
    </source>
</evidence>
<evidence type="ECO:0000269" key="7">
    <source>
    </source>
</evidence>
<evidence type="ECO:0000269" key="8">
    <source>
    </source>
</evidence>
<evidence type="ECO:0000303" key="9">
    <source>
    </source>
</evidence>
<evidence type="ECO:0000305" key="10"/>
<evidence type="ECO:0000305" key="11">
    <source>
    </source>
</evidence>
<evidence type="ECO:0000312" key="12">
    <source>
        <dbReference type="MGI" id="MGI:2159210"/>
    </source>
</evidence>
<dbReference type="EC" id="2.4.2.-" evidence="8"/>
<dbReference type="EMBL" id="AK028529">
    <property type="protein sequence ID" value="BAC25994.1"/>
    <property type="molecule type" value="mRNA"/>
</dbReference>
<dbReference type="EMBL" id="AK032453">
    <property type="protein sequence ID" value="BAC27876.1"/>
    <property type="molecule type" value="mRNA"/>
</dbReference>
<dbReference type="EMBL" id="AK150248">
    <property type="protein sequence ID" value="BAE29412.1"/>
    <property type="molecule type" value="mRNA"/>
</dbReference>
<dbReference type="EMBL" id="AK162094">
    <property type="protein sequence ID" value="BAE36720.1"/>
    <property type="molecule type" value="mRNA"/>
</dbReference>
<dbReference type="EMBL" id="BC068173">
    <property type="protein sequence ID" value="AAH68173.1"/>
    <property type="molecule type" value="mRNA"/>
</dbReference>
<dbReference type="CCDS" id="CCDS17388.1"/>
<dbReference type="RefSeq" id="NP_849223.2">
    <property type="nucleotide sequence ID" value="NM_178892.5"/>
</dbReference>
<dbReference type="SMR" id="Q8C1B2"/>
<dbReference type="BioGRID" id="221345">
    <property type="interactions" value="1"/>
</dbReference>
<dbReference type="FunCoup" id="Q8C1B2">
    <property type="interactions" value="1804"/>
</dbReference>
<dbReference type="STRING" id="10090.ENSMUSP00000048051"/>
<dbReference type="ChEMBL" id="CHEMBL5465543"/>
<dbReference type="iPTMnet" id="Q8C1B2"/>
<dbReference type="PhosphoSitePlus" id="Q8C1B2"/>
<dbReference type="jPOST" id="Q8C1B2"/>
<dbReference type="PaxDb" id="10090-ENSMUSP00000048051"/>
<dbReference type="ProteomicsDB" id="294330"/>
<dbReference type="Antibodypedia" id="33637">
    <property type="antibodies" value="81 antibodies from 24 providers"/>
</dbReference>
<dbReference type="Ensembl" id="ENSMUST00000047906.10">
    <property type="protein sequence ID" value="ENSMUSP00000048051.4"/>
    <property type="gene ID" value="ENSMUSG00000034640.10"/>
</dbReference>
<dbReference type="GeneID" id="99929"/>
<dbReference type="KEGG" id="mmu:99929"/>
<dbReference type="UCSC" id="uc008pkr.1">
    <property type="organism name" value="mouse"/>
</dbReference>
<dbReference type="AGR" id="MGI:2159210"/>
<dbReference type="CTD" id="25976"/>
<dbReference type="MGI" id="MGI:2159210">
    <property type="gene designation" value="Tiparp"/>
</dbReference>
<dbReference type="VEuPathDB" id="HostDB:ENSMUSG00000034640"/>
<dbReference type="eggNOG" id="ENOG502QQXA">
    <property type="taxonomic scope" value="Eukaryota"/>
</dbReference>
<dbReference type="GeneTree" id="ENSGT00940000155368"/>
<dbReference type="HOGENOM" id="CLU_014825_0_1_1"/>
<dbReference type="InParanoid" id="Q8C1B2"/>
<dbReference type="OMA" id="IEEANCR"/>
<dbReference type="OrthoDB" id="6133115at2759"/>
<dbReference type="PhylomeDB" id="Q8C1B2"/>
<dbReference type="TreeFam" id="TF328965"/>
<dbReference type="BioGRID-ORCS" id="99929">
    <property type="hits" value="10 hits in 77 CRISPR screens"/>
</dbReference>
<dbReference type="ChiTaRS" id="Tiparp">
    <property type="organism name" value="mouse"/>
</dbReference>
<dbReference type="PRO" id="PR:Q8C1B2"/>
<dbReference type="Proteomes" id="UP000000589">
    <property type="component" value="Chromosome 3"/>
</dbReference>
<dbReference type="RNAct" id="Q8C1B2">
    <property type="molecule type" value="protein"/>
</dbReference>
<dbReference type="Bgee" id="ENSMUSG00000034640">
    <property type="expression patterns" value="Expressed in animal zygote and 257 other cell types or tissues"/>
</dbReference>
<dbReference type="ExpressionAtlas" id="Q8C1B2">
    <property type="expression patterns" value="baseline and differential"/>
</dbReference>
<dbReference type="GO" id="GO:0005634">
    <property type="term" value="C:nucleus"/>
    <property type="evidence" value="ECO:0000250"/>
    <property type="project" value="UniProtKB"/>
</dbReference>
<dbReference type="GO" id="GO:0000987">
    <property type="term" value="F:cis-regulatory region sequence-specific DNA binding"/>
    <property type="evidence" value="ECO:0000266"/>
    <property type="project" value="MGI"/>
</dbReference>
<dbReference type="GO" id="GO:0003950">
    <property type="term" value="F:NAD+ poly-ADP-ribosyltransferase activity"/>
    <property type="evidence" value="ECO:0000314"/>
    <property type="project" value="MGI"/>
</dbReference>
<dbReference type="GO" id="GO:0140806">
    <property type="term" value="F:NAD+-protein-aspartate ADP-ribosyltransferase activity"/>
    <property type="evidence" value="ECO:0007669"/>
    <property type="project" value="RHEA"/>
</dbReference>
<dbReference type="GO" id="GO:0140803">
    <property type="term" value="F:NAD+-protein-cysteine ADP-ribosyltransferase activity"/>
    <property type="evidence" value="ECO:0000250"/>
    <property type="project" value="UniProtKB"/>
</dbReference>
<dbReference type="GO" id="GO:0140807">
    <property type="term" value="F:NAD+-protein-glutamate ADP-ribosyltransferase activity"/>
    <property type="evidence" value="ECO:0007669"/>
    <property type="project" value="RHEA"/>
</dbReference>
<dbReference type="GO" id="GO:0016779">
    <property type="term" value="F:nucleotidyltransferase activity"/>
    <property type="evidence" value="ECO:0007669"/>
    <property type="project" value="UniProtKB-KW"/>
</dbReference>
<dbReference type="GO" id="GO:0008270">
    <property type="term" value="F:zinc ion binding"/>
    <property type="evidence" value="ECO:0007669"/>
    <property type="project" value="UniProtKB-KW"/>
</dbReference>
<dbReference type="GO" id="GO:0008209">
    <property type="term" value="P:androgen metabolic process"/>
    <property type="evidence" value="ECO:0000315"/>
    <property type="project" value="MGI"/>
</dbReference>
<dbReference type="GO" id="GO:0008210">
    <property type="term" value="P:estrogen metabolic process"/>
    <property type="evidence" value="ECO:0000315"/>
    <property type="project" value="MGI"/>
</dbReference>
<dbReference type="GO" id="GO:0060325">
    <property type="term" value="P:face morphogenesis"/>
    <property type="evidence" value="ECO:0000315"/>
    <property type="project" value="MGI"/>
</dbReference>
<dbReference type="GO" id="GO:0008585">
    <property type="term" value="P:female gonad development"/>
    <property type="evidence" value="ECO:0000315"/>
    <property type="project" value="MGI"/>
</dbReference>
<dbReference type="GO" id="GO:0030097">
    <property type="term" value="P:hemopoiesis"/>
    <property type="evidence" value="ECO:0000315"/>
    <property type="project" value="MGI"/>
</dbReference>
<dbReference type="GO" id="GO:0001822">
    <property type="term" value="P:kidney development"/>
    <property type="evidence" value="ECO:0000315"/>
    <property type="project" value="MGI"/>
</dbReference>
<dbReference type="GO" id="GO:0010629">
    <property type="term" value="P:negative regulation of gene expression"/>
    <property type="evidence" value="ECO:0000266"/>
    <property type="project" value="MGI"/>
</dbReference>
<dbReference type="GO" id="GO:0048008">
    <property type="term" value="P:platelet-derived growth factor receptor signaling pathway"/>
    <property type="evidence" value="ECO:0000315"/>
    <property type="project" value="MGI"/>
</dbReference>
<dbReference type="GO" id="GO:0045732">
    <property type="term" value="P:positive regulation of protein catabolic process"/>
    <property type="evidence" value="ECO:0000266"/>
    <property type="project" value="MGI"/>
</dbReference>
<dbReference type="GO" id="GO:0009791">
    <property type="term" value="P:post-embryonic development"/>
    <property type="evidence" value="ECO:0000315"/>
    <property type="project" value="MGI"/>
</dbReference>
<dbReference type="GO" id="GO:1904612">
    <property type="term" value="P:response to 2,3,7,8-tetrachlorodibenzodioxine"/>
    <property type="evidence" value="ECO:0007669"/>
    <property type="project" value="Ensembl"/>
</dbReference>
<dbReference type="GO" id="GO:0060021">
    <property type="term" value="P:roof of mouth development"/>
    <property type="evidence" value="ECO:0000315"/>
    <property type="project" value="MGI"/>
</dbReference>
<dbReference type="GO" id="GO:0048705">
    <property type="term" value="P:skeletal system morphogenesis"/>
    <property type="evidence" value="ECO:0000315"/>
    <property type="project" value="MGI"/>
</dbReference>
<dbReference type="GO" id="GO:0048745">
    <property type="term" value="P:smooth muscle tissue development"/>
    <property type="evidence" value="ECO:0000315"/>
    <property type="project" value="MGI"/>
</dbReference>
<dbReference type="GO" id="GO:0001570">
    <property type="term" value="P:vasculogenesis"/>
    <property type="evidence" value="ECO:0000315"/>
    <property type="project" value="MGI"/>
</dbReference>
<dbReference type="CDD" id="cd01439">
    <property type="entry name" value="TCCD_inducible_PARP_like"/>
    <property type="match status" value="1"/>
</dbReference>
<dbReference type="FunFam" id="3.90.228.10:FF:000003">
    <property type="entry name" value="TCDD-inducible poly [ADP-ribose] polymerase"/>
    <property type="match status" value="1"/>
</dbReference>
<dbReference type="Gene3D" id="3.90.228.10">
    <property type="match status" value="1"/>
</dbReference>
<dbReference type="InterPro" id="IPR051712">
    <property type="entry name" value="ARTD-AVP"/>
</dbReference>
<dbReference type="InterPro" id="IPR012317">
    <property type="entry name" value="Poly(ADP-ribose)pol_cat_dom"/>
</dbReference>
<dbReference type="InterPro" id="IPR004170">
    <property type="entry name" value="WWE_dom"/>
</dbReference>
<dbReference type="InterPro" id="IPR037197">
    <property type="entry name" value="WWE_dom_sf"/>
</dbReference>
<dbReference type="InterPro" id="IPR000571">
    <property type="entry name" value="Znf_CCCH"/>
</dbReference>
<dbReference type="PANTHER" id="PTHR45740">
    <property type="entry name" value="POLY [ADP-RIBOSE] POLYMERASE"/>
    <property type="match status" value="1"/>
</dbReference>
<dbReference type="PANTHER" id="PTHR45740:SF7">
    <property type="entry name" value="PROTEIN MONO-ADP-RIBOSYLTRANSFERASE TIPARP"/>
    <property type="match status" value="1"/>
</dbReference>
<dbReference type="Pfam" id="PF00644">
    <property type="entry name" value="PARP"/>
    <property type="match status" value="1"/>
</dbReference>
<dbReference type="Pfam" id="PF23466">
    <property type="entry name" value="WWE_4"/>
    <property type="match status" value="1"/>
</dbReference>
<dbReference type="SUPFAM" id="SSF56399">
    <property type="entry name" value="ADP-ribosylation"/>
    <property type="match status" value="1"/>
</dbReference>
<dbReference type="SUPFAM" id="SSF117839">
    <property type="entry name" value="WWE domain"/>
    <property type="match status" value="1"/>
</dbReference>
<dbReference type="PROSITE" id="PS51059">
    <property type="entry name" value="PARP_CATALYTIC"/>
    <property type="match status" value="1"/>
</dbReference>
<dbReference type="PROSITE" id="PS50918">
    <property type="entry name" value="WWE"/>
    <property type="match status" value="1"/>
</dbReference>
<dbReference type="PROSITE" id="PS50103">
    <property type="entry name" value="ZF_C3H1"/>
    <property type="match status" value="1"/>
</dbReference>
<accession>Q8C1B2</accession>
<accession>Q3UD50</accession>
<accession>Q8C032</accession>
<reference key="1">
    <citation type="journal article" date="2001" name="Biochem. Biophys. Res. Commun.">
        <title>TCDD-inducible poly(ADP-ribose) polymerase: a novel response to 2,3,7,8-tetrachlorodibenzo-p-dioxin.</title>
        <authorList>
            <person name="Ma Q."/>
            <person name="Baldwin K.T."/>
            <person name="Renzelli A.J."/>
            <person name="McDaniel A."/>
            <person name="Dong L."/>
        </authorList>
    </citation>
    <scope>NUCLEOTIDE SEQUENCE [MRNA]</scope>
    <scope>INDUCTION</scope>
    <scope>TISSUE SPECIFICITY</scope>
</reference>
<reference key="2">
    <citation type="journal article" date="2005" name="Science">
        <title>The transcriptional landscape of the mammalian genome.</title>
        <authorList>
            <person name="Carninci P."/>
            <person name="Kasukawa T."/>
            <person name="Katayama S."/>
            <person name="Gough J."/>
            <person name="Frith M.C."/>
            <person name="Maeda N."/>
            <person name="Oyama R."/>
            <person name="Ravasi T."/>
            <person name="Lenhard B."/>
            <person name="Wells C."/>
            <person name="Kodzius R."/>
            <person name="Shimokawa K."/>
            <person name="Bajic V.B."/>
            <person name="Brenner S.E."/>
            <person name="Batalov S."/>
            <person name="Forrest A.R."/>
            <person name="Zavolan M."/>
            <person name="Davis M.J."/>
            <person name="Wilming L.G."/>
            <person name="Aidinis V."/>
            <person name="Allen J.E."/>
            <person name="Ambesi-Impiombato A."/>
            <person name="Apweiler R."/>
            <person name="Aturaliya R.N."/>
            <person name="Bailey T.L."/>
            <person name="Bansal M."/>
            <person name="Baxter L."/>
            <person name="Beisel K.W."/>
            <person name="Bersano T."/>
            <person name="Bono H."/>
            <person name="Chalk A.M."/>
            <person name="Chiu K.P."/>
            <person name="Choudhary V."/>
            <person name="Christoffels A."/>
            <person name="Clutterbuck D.R."/>
            <person name="Crowe M.L."/>
            <person name="Dalla E."/>
            <person name="Dalrymple B.P."/>
            <person name="de Bono B."/>
            <person name="Della Gatta G."/>
            <person name="di Bernardo D."/>
            <person name="Down T."/>
            <person name="Engstrom P."/>
            <person name="Fagiolini M."/>
            <person name="Faulkner G."/>
            <person name="Fletcher C.F."/>
            <person name="Fukushima T."/>
            <person name="Furuno M."/>
            <person name="Futaki S."/>
            <person name="Gariboldi M."/>
            <person name="Georgii-Hemming P."/>
            <person name="Gingeras T.R."/>
            <person name="Gojobori T."/>
            <person name="Green R.E."/>
            <person name="Gustincich S."/>
            <person name="Harbers M."/>
            <person name="Hayashi Y."/>
            <person name="Hensch T.K."/>
            <person name="Hirokawa N."/>
            <person name="Hill D."/>
            <person name="Huminiecki L."/>
            <person name="Iacono M."/>
            <person name="Ikeo K."/>
            <person name="Iwama A."/>
            <person name="Ishikawa T."/>
            <person name="Jakt M."/>
            <person name="Kanapin A."/>
            <person name="Katoh M."/>
            <person name="Kawasawa Y."/>
            <person name="Kelso J."/>
            <person name="Kitamura H."/>
            <person name="Kitano H."/>
            <person name="Kollias G."/>
            <person name="Krishnan S.P."/>
            <person name="Kruger A."/>
            <person name="Kummerfeld S.K."/>
            <person name="Kurochkin I.V."/>
            <person name="Lareau L.F."/>
            <person name="Lazarevic D."/>
            <person name="Lipovich L."/>
            <person name="Liu J."/>
            <person name="Liuni S."/>
            <person name="McWilliam S."/>
            <person name="Madan Babu M."/>
            <person name="Madera M."/>
            <person name="Marchionni L."/>
            <person name="Matsuda H."/>
            <person name="Matsuzawa S."/>
            <person name="Miki H."/>
            <person name="Mignone F."/>
            <person name="Miyake S."/>
            <person name="Morris K."/>
            <person name="Mottagui-Tabar S."/>
            <person name="Mulder N."/>
            <person name="Nakano N."/>
            <person name="Nakauchi H."/>
            <person name="Ng P."/>
            <person name="Nilsson R."/>
            <person name="Nishiguchi S."/>
            <person name="Nishikawa S."/>
            <person name="Nori F."/>
            <person name="Ohara O."/>
            <person name="Okazaki Y."/>
            <person name="Orlando V."/>
            <person name="Pang K.C."/>
            <person name="Pavan W.J."/>
            <person name="Pavesi G."/>
            <person name="Pesole G."/>
            <person name="Petrovsky N."/>
            <person name="Piazza S."/>
            <person name="Reed J."/>
            <person name="Reid J.F."/>
            <person name="Ring B.Z."/>
            <person name="Ringwald M."/>
            <person name="Rost B."/>
            <person name="Ruan Y."/>
            <person name="Salzberg S.L."/>
            <person name="Sandelin A."/>
            <person name="Schneider C."/>
            <person name="Schoenbach C."/>
            <person name="Sekiguchi K."/>
            <person name="Semple C.A."/>
            <person name="Seno S."/>
            <person name="Sessa L."/>
            <person name="Sheng Y."/>
            <person name="Shibata Y."/>
            <person name="Shimada H."/>
            <person name="Shimada K."/>
            <person name="Silva D."/>
            <person name="Sinclair B."/>
            <person name="Sperling S."/>
            <person name="Stupka E."/>
            <person name="Sugiura K."/>
            <person name="Sultana R."/>
            <person name="Takenaka Y."/>
            <person name="Taki K."/>
            <person name="Tammoja K."/>
            <person name="Tan S.L."/>
            <person name="Tang S."/>
            <person name="Taylor M.S."/>
            <person name="Tegner J."/>
            <person name="Teichmann S.A."/>
            <person name="Ueda H.R."/>
            <person name="van Nimwegen E."/>
            <person name="Verardo R."/>
            <person name="Wei C.L."/>
            <person name="Yagi K."/>
            <person name="Yamanishi H."/>
            <person name="Zabarovsky E."/>
            <person name="Zhu S."/>
            <person name="Zimmer A."/>
            <person name="Hide W."/>
            <person name="Bult C."/>
            <person name="Grimmond S.M."/>
            <person name="Teasdale R.D."/>
            <person name="Liu E.T."/>
            <person name="Brusic V."/>
            <person name="Quackenbush J."/>
            <person name="Wahlestedt C."/>
            <person name="Mattick J.S."/>
            <person name="Hume D.A."/>
            <person name="Kai C."/>
            <person name="Sasaki D."/>
            <person name="Tomaru Y."/>
            <person name="Fukuda S."/>
            <person name="Kanamori-Katayama M."/>
            <person name="Suzuki M."/>
            <person name="Aoki J."/>
            <person name="Arakawa T."/>
            <person name="Iida J."/>
            <person name="Imamura K."/>
            <person name="Itoh M."/>
            <person name="Kato T."/>
            <person name="Kawaji H."/>
            <person name="Kawagashira N."/>
            <person name="Kawashima T."/>
            <person name="Kojima M."/>
            <person name="Kondo S."/>
            <person name="Konno H."/>
            <person name="Nakano K."/>
            <person name="Ninomiya N."/>
            <person name="Nishio T."/>
            <person name="Okada M."/>
            <person name="Plessy C."/>
            <person name="Shibata K."/>
            <person name="Shiraki T."/>
            <person name="Suzuki S."/>
            <person name="Tagami M."/>
            <person name="Waki K."/>
            <person name="Watahiki A."/>
            <person name="Okamura-Oho Y."/>
            <person name="Suzuki H."/>
            <person name="Kawai J."/>
            <person name="Hayashizaki Y."/>
        </authorList>
    </citation>
    <scope>NUCLEOTIDE SEQUENCE [LARGE SCALE MRNA]</scope>
    <source>
        <strain>C57BL/6J</strain>
        <tissue>Bone marrow</tissue>
        <tissue>Olfactory bulb</tissue>
        <tissue>Skin</tissue>
    </source>
</reference>
<reference key="3">
    <citation type="journal article" date="2004" name="Genome Res.">
        <title>The status, quality, and expansion of the NIH full-length cDNA project: the Mammalian Gene Collection (MGC).</title>
        <authorList>
            <consortium name="The MGC Project Team"/>
        </authorList>
    </citation>
    <scope>NUCLEOTIDE SEQUENCE [LARGE SCALE MRNA]</scope>
    <source>
        <strain>C57BL/6J</strain>
        <tissue>Eye</tissue>
    </source>
</reference>
<reference key="4">
    <citation type="journal article" date="2002" name="Arch. Biochem. Biophys.">
        <title>Induction and superinduction of 2,3,7,8-tetrachlorodibenzo-rho-dioxin-inducible poly(ADP-ribose) polymerase: role of the aryl hydrocarbon receptor/aryl hydrocarbon receptor nuclear translocator transcription activation domains and a labile transcription repressor.</title>
        <authorList>
            <person name="Ma Q."/>
        </authorList>
    </citation>
    <scope>INDUCTION</scope>
</reference>
<reference key="5">
    <citation type="journal article" date="2013" name="Nucleic Acids Res.">
        <title>2,3,7,8-Tetrachlorodibenzo-p-dioxin poly(ADP-ribose) polymerase (TiPARP, ARTD14) is a mono-ADP-ribosyltransferase and repressor of aryl hydrocarbon receptor transactivation.</title>
        <authorList>
            <person name="MacPherson L."/>
            <person name="Tamblyn L."/>
            <person name="Rajendra S."/>
            <person name="Bralha F."/>
            <person name="McPherson J.P."/>
            <person name="Matthews J."/>
        </authorList>
    </citation>
    <scope>FUNCTION</scope>
    <scope>SUBCELLULAR LOCATION</scope>
</reference>
<gene>
    <name evidence="9 12" type="primary">Tiparp</name>
</gene>
<proteinExistence type="evidence at transcript level"/>
<name>PARPT_MOUSE</name>